<comment type="function">
    <text evidence="1">Catalyzes the interconversion of 2-phosphoglycerate and 3-phosphoglycerate.</text>
</comment>
<comment type="catalytic activity">
    <reaction evidence="1">
        <text>(2R)-2-phosphoglycerate = (2R)-3-phosphoglycerate</text>
        <dbReference type="Rhea" id="RHEA:15901"/>
        <dbReference type="ChEBI" id="CHEBI:58272"/>
        <dbReference type="ChEBI" id="CHEBI:58289"/>
        <dbReference type="EC" id="5.4.2.12"/>
    </reaction>
</comment>
<comment type="cofactor">
    <cofactor evidence="1">
        <name>Mn(2+)</name>
        <dbReference type="ChEBI" id="CHEBI:29035"/>
    </cofactor>
    <text evidence="1">Binds 2 manganese ions per subunit.</text>
</comment>
<comment type="pathway">
    <text evidence="1">Carbohydrate degradation; glycolysis; pyruvate from D-glyceraldehyde 3-phosphate: step 3/5.</text>
</comment>
<comment type="subunit">
    <text evidence="1">Monomer.</text>
</comment>
<comment type="similarity">
    <text evidence="1">Belongs to the BPG-independent phosphoglycerate mutase family.</text>
</comment>
<keyword id="KW-0324">Glycolysis</keyword>
<keyword id="KW-0413">Isomerase</keyword>
<keyword id="KW-0464">Manganese</keyword>
<keyword id="KW-0479">Metal-binding</keyword>
<name>GPMI_FRAT1</name>
<evidence type="ECO:0000255" key="1">
    <source>
        <dbReference type="HAMAP-Rule" id="MF_01038"/>
    </source>
</evidence>
<proteinExistence type="inferred from homology"/>
<gene>
    <name evidence="1" type="primary">gpmI</name>
    <name type="ordered locus">FTF1329</name>
</gene>
<sequence>MKKTTLLVILDGWGYSDSDYFNAIKNANTPTWDSIWQEFPKTLINASSLEVGLPRSQMGNSEVGHVNIGCGRVVYQELTKIDKAIEEKTFGDNKAICAAIDNAIKNDSNLHLIGLLSPGGVHSHEEHIFEMIKIAKQKGIKRLYLHAFLDGRDTPPRSAEKSIKKADKLLQDLNLGYIASVCGRYYAMDRDNRWDRVEKAYNAIVNANADFIYDSALEALEQSYARDQSDEFVIPTCIKKDGHLVKVQDNDSVIFMNFRADRAREISHAFTDESFDHFPRKKHLNINFTTLTEYDSKLKCAVAFPPEQPINTLGEVLMKNHKTQLRIAETEKYPHVTFFFNGGREEQFEGEDRILIPSPKVATYDLQPEMSAPEVTDKLVAAINSGKYDCIVCNYANSDMVGHTGNYEAAMQAIEYLDKCIARLKDAILEHDGNMFITADHGNADMMVNPETQKPHTAHTTNLVPFIYVGHKKAQVALEHGKLSDIAPTLLNVMGIAQPKEMTGKTIFNFEK</sequence>
<protein>
    <recommendedName>
        <fullName evidence="1">2,3-bisphosphoglycerate-independent phosphoglycerate mutase</fullName>
        <shortName evidence="1">BPG-independent PGAM</shortName>
        <shortName evidence="1">Phosphoglyceromutase</shortName>
        <shortName evidence="1">iPGM</shortName>
        <ecNumber evidence="1">5.4.2.12</ecNumber>
    </recommendedName>
</protein>
<dbReference type="EC" id="5.4.2.12" evidence="1"/>
<dbReference type="EMBL" id="AM286280">
    <property type="protein sequence ID" value="CAL09345.1"/>
    <property type="molecule type" value="Genomic_DNA"/>
</dbReference>
<dbReference type="RefSeq" id="WP_003022072.1">
    <property type="nucleotide sequence ID" value="NC_008245.1"/>
</dbReference>
<dbReference type="SMR" id="Q14GR4"/>
<dbReference type="KEGG" id="ftf:FTF1329"/>
<dbReference type="HOGENOM" id="CLU_026099_2_0_6"/>
<dbReference type="UniPathway" id="UPA00109">
    <property type="reaction ID" value="UER00186"/>
</dbReference>
<dbReference type="GO" id="GO:0005829">
    <property type="term" value="C:cytosol"/>
    <property type="evidence" value="ECO:0007669"/>
    <property type="project" value="TreeGrafter"/>
</dbReference>
<dbReference type="GO" id="GO:0030145">
    <property type="term" value="F:manganese ion binding"/>
    <property type="evidence" value="ECO:0007669"/>
    <property type="project" value="UniProtKB-UniRule"/>
</dbReference>
<dbReference type="GO" id="GO:0004619">
    <property type="term" value="F:phosphoglycerate mutase activity"/>
    <property type="evidence" value="ECO:0007669"/>
    <property type="project" value="UniProtKB-EC"/>
</dbReference>
<dbReference type="GO" id="GO:0006007">
    <property type="term" value="P:glucose catabolic process"/>
    <property type="evidence" value="ECO:0007669"/>
    <property type="project" value="InterPro"/>
</dbReference>
<dbReference type="GO" id="GO:0006096">
    <property type="term" value="P:glycolytic process"/>
    <property type="evidence" value="ECO:0007669"/>
    <property type="project" value="UniProtKB-UniRule"/>
</dbReference>
<dbReference type="CDD" id="cd16010">
    <property type="entry name" value="iPGM"/>
    <property type="match status" value="1"/>
</dbReference>
<dbReference type="FunFam" id="3.40.1450.10:FF:000001">
    <property type="entry name" value="2,3-bisphosphoglycerate-independent phosphoglycerate mutase"/>
    <property type="match status" value="1"/>
</dbReference>
<dbReference type="FunFam" id="3.40.720.10:FF:000001">
    <property type="entry name" value="2,3-bisphosphoglycerate-independent phosphoglycerate mutase"/>
    <property type="match status" value="1"/>
</dbReference>
<dbReference type="Gene3D" id="3.40.720.10">
    <property type="entry name" value="Alkaline Phosphatase, subunit A"/>
    <property type="match status" value="1"/>
</dbReference>
<dbReference type="Gene3D" id="3.40.1450.10">
    <property type="entry name" value="BPG-independent phosphoglycerate mutase, domain B"/>
    <property type="match status" value="1"/>
</dbReference>
<dbReference type="HAMAP" id="MF_01038">
    <property type="entry name" value="GpmI"/>
    <property type="match status" value="1"/>
</dbReference>
<dbReference type="InterPro" id="IPR017850">
    <property type="entry name" value="Alkaline_phosphatase_core_sf"/>
</dbReference>
<dbReference type="InterPro" id="IPR011258">
    <property type="entry name" value="BPG-indep_PGM_N"/>
</dbReference>
<dbReference type="InterPro" id="IPR006124">
    <property type="entry name" value="Metalloenzyme"/>
</dbReference>
<dbReference type="InterPro" id="IPR036646">
    <property type="entry name" value="PGAM_B_sf"/>
</dbReference>
<dbReference type="InterPro" id="IPR005995">
    <property type="entry name" value="Pgm_bpd_ind"/>
</dbReference>
<dbReference type="NCBIfam" id="TIGR01307">
    <property type="entry name" value="pgm_bpd_ind"/>
    <property type="match status" value="1"/>
</dbReference>
<dbReference type="PANTHER" id="PTHR31637">
    <property type="entry name" value="2,3-BISPHOSPHOGLYCERATE-INDEPENDENT PHOSPHOGLYCERATE MUTASE"/>
    <property type="match status" value="1"/>
</dbReference>
<dbReference type="PANTHER" id="PTHR31637:SF0">
    <property type="entry name" value="2,3-BISPHOSPHOGLYCERATE-INDEPENDENT PHOSPHOGLYCERATE MUTASE"/>
    <property type="match status" value="1"/>
</dbReference>
<dbReference type="Pfam" id="PF06415">
    <property type="entry name" value="iPGM_N"/>
    <property type="match status" value="1"/>
</dbReference>
<dbReference type="Pfam" id="PF01676">
    <property type="entry name" value="Metalloenzyme"/>
    <property type="match status" value="1"/>
</dbReference>
<dbReference type="PIRSF" id="PIRSF001492">
    <property type="entry name" value="IPGAM"/>
    <property type="match status" value="1"/>
</dbReference>
<dbReference type="SUPFAM" id="SSF64158">
    <property type="entry name" value="2,3-Bisphosphoglycerate-independent phosphoglycerate mutase, substrate-binding domain"/>
    <property type="match status" value="1"/>
</dbReference>
<dbReference type="SUPFAM" id="SSF53649">
    <property type="entry name" value="Alkaline phosphatase-like"/>
    <property type="match status" value="1"/>
</dbReference>
<reference key="1">
    <citation type="journal article" date="2007" name="PLoS ONE">
        <title>Genome sequencing shows that European isolates of Francisella tularensis subspecies tularensis are almost identical to US laboratory strain Schu S4.</title>
        <authorList>
            <person name="Chaudhuri R.R."/>
            <person name="Ren C.-P."/>
            <person name="Desmond L."/>
            <person name="Vincent G.A."/>
            <person name="Silman N.J."/>
            <person name="Brehm J.K."/>
            <person name="Elmore M.J."/>
            <person name="Hudson M.J."/>
            <person name="Forsman M."/>
            <person name="Isherwood K.E."/>
            <person name="Gurycova D."/>
            <person name="Minton N.P."/>
            <person name="Titball R.W."/>
            <person name="Pallen M.J."/>
            <person name="Vipond R."/>
        </authorList>
    </citation>
    <scope>NUCLEOTIDE SEQUENCE [LARGE SCALE GENOMIC DNA]</scope>
    <source>
        <strain>FSC 198</strain>
    </source>
</reference>
<feature type="chain" id="PRO_1000063968" description="2,3-bisphosphoglycerate-independent phosphoglycerate mutase">
    <location>
        <begin position="1"/>
        <end position="512"/>
    </location>
</feature>
<feature type="active site" description="Phosphoserine intermediate" evidence="1">
    <location>
        <position position="61"/>
    </location>
</feature>
<feature type="binding site" evidence="1">
    <location>
        <position position="11"/>
    </location>
    <ligand>
        <name>Mn(2+)</name>
        <dbReference type="ChEBI" id="CHEBI:29035"/>
        <label>2</label>
    </ligand>
</feature>
<feature type="binding site" evidence="1">
    <location>
        <position position="61"/>
    </location>
    <ligand>
        <name>Mn(2+)</name>
        <dbReference type="ChEBI" id="CHEBI:29035"/>
        <label>2</label>
    </ligand>
</feature>
<feature type="binding site" evidence="1">
    <location>
        <position position="122"/>
    </location>
    <ligand>
        <name>substrate</name>
    </ligand>
</feature>
<feature type="binding site" evidence="1">
    <location>
        <begin position="152"/>
        <end position="153"/>
    </location>
    <ligand>
        <name>substrate</name>
    </ligand>
</feature>
<feature type="binding site" evidence="1">
    <location>
        <position position="184"/>
    </location>
    <ligand>
        <name>substrate</name>
    </ligand>
</feature>
<feature type="binding site" evidence="1">
    <location>
        <position position="190"/>
    </location>
    <ligand>
        <name>substrate</name>
    </ligand>
</feature>
<feature type="binding site" evidence="1">
    <location>
        <begin position="259"/>
        <end position="262"/>
    </location>
    <ligand>
        <name>substrate</name>
    </ligand>
</feature>
<feature type="binding site" evidence="1">
    <location>
        <position position="332"/>
    </location>
    <ligand>
        <name>substrate</name>
    </ligand>
</feature>
<feature type="binding site" evidence="1">
    <location>
        <position position="399"/>
    </location>
    <ligand>
        <name>Mn(2+)</name>
        <dbReference type="ChEBI" id="CHEBI:29035"/>
        <label>1</label>
    </ligand>
</feature>
<feature type="binding site" evidence="1">
    <location>
        <position position="403"/>
    </location>
    <ligand>
        <name>Mn(2+)</name>
        <dbReference type="ChEBI" id="CHEBI:29035"/>
        <label>1</label>
    </ligand>
</feature>
<feature type="binding site" evidence="1">
    <location>
        <position position="440"/>
    </location>
    <ligand>
        <name>Mn(2+)</name>
        <dbReference type="ChEBI" id="CHEBI:29035"/>
        <label>2</label>
    </ligand>
</feature>
<feature type="binding site" evidence="1">
    <location>
        <position position="441"/>
    </location>
    <ligand>
        <name>Mn(2+)</name>
        <dbReference type="ChEBI" id="CHEBI:29035"/>
        <label>2</label>
    </ligand>
</feature>
<feature type="binding site" evidence="1">
    <location>
        <position position="459"/>
    </location>
    <ligand>
        <name>Mn(2+)</name>
        <dbReference type="ChEBI" id="CHEBI:29035"/>
        <label>1</label>
    </ligand>
</feature>
<accession>Q14GR4</accession>
<organism>
    <name type="scientific">Francisella tularensis subsp. tularensis (strain FSC 198)</name>
    <dbReference type="NCBI Taxonomy" id="393115"/>
    <lineage>
        <taxon>Bacteria</taxon>
        <taxon>Pseudomonadati</taxon>
        <taxon>Pseudomonadota</taxon>
        <taxon>Gammaproteobacteria</taxon>
        <taxon>Thiotrichales</taxon>
        <taxon>Francisellaceae</taxon>
        <taxon>Francisella</taxon>
    </lineage>
</organism>